<comment type="function">
    <text evidence="1">Responsible for synthesis of pseudouridine from uracil-55 in the psi GC loop of transfer RNAs.</text>
</comment>
<comment type="catalytic activity">
    <reaction evidence="1">
        <text>uridine(55) in tRNA = pseudouridine(55) in tRNA</text>
        <dbReference type="Rhea" id="RHEA:42532"/>
        <dbReference type="Rhea" id="RHEA-COMP:10101"/>
        <dbReference type="Rhea" id="RHEA-COMP:10102"/>
        <dbReference type="ChEBI" id="CHEBI:65314"/>
        <dbReference type="ChEBI" id="CHEBI:65315"/>
        <dbReference type="EC" id="5.4.99.25"/>
    </reaction>
</comment>
<comment type="similarity">
    <text evidence="1">Belongs to the pseudouridine synthase TruB family. Type 1 subfamily.</text>
</comment>
<protein>
    <recommendedName>
        <fullName evidence="1">tRNA pseudouridine synthase B</fullName>
        <ecNumber evidence="1">5.4.99.25</ecNumber>
    </recommendedName>
    <alternativeName>
        <fullName evidence="1">tRNA pseudouridine(55) synthase</fullName>
        <shortName evidence="1">Psi55 synthase</shortName>
    </alternativeName>
    <alternativeName>
        <fullName evidence="1">tRNA pseudouridylate synthase</fullName>
    </alternativeName>
    <alternativeName>
        <fullName evidence="1">tRNA-uridine isomerase</fullName>
    </alternativeName>
</protein>
<evidence type="ECO:0000255" key="1">
    <source>
        <dbReference type="HAMAP-Rule" id="MF_01080"/>
    </source>
</evidence>
<keyword id="KW-0413">Isomerase</keyword>
<keyword id="KW-0819">tRNA processing</keyword>
<gene>
    <name evidence="1" type="primary">truB</name>
    <name type="ordered locus">PA14_62730</name>
</gene>
<accession>Q02FT0</accession>
<sequence>MAQVKRIRRSISGILVLDKPRGMSSNQALQKVRWLLNAEKAGHTGSLDPLATGVLPLCFGEATKFSQYLLDADKGYETVMRMGITTTTGDAEGELLAERDVTVGRDDLEQALPRFRGDIEQVPPMYSALKKDGQPLYKLARAGEVVEREARSVTITRLDLLSFEPPCATLAVSCSKGTYVRTLVEDLGQVLGCGAHVAALRRTQAGPFALAQAITLETLERVHAEGGPEALDQFLMPEDSGLLHWPVLQLSEHSAYYWLHGQPVRAPEAPKFGWLRVQDQTGRFIGIGEVTDDGRIAPRRLIRS</sequence>
<organism>
    <name type="scientific">Pseudomonas aeruginosa (strain UCBPP-PA14)</name>
    <dbReference type="NCBI Taxonomy" id="208963"/>
    <lineage>
        <taxon>Bacteria</taxon>
        <taxon>Pseudomonadati</taxon>
        <taxon>Pseudomonadota</taxon>
        <taxon>Gammaproteobacteria</taxon>
        <taxon>Pseudomonadales</taxon>
        <taxon>Pseudomonadaceae</taxon>
        <taxon>Pseudomonas</taxon>
    </lineage>
</organism>
<feature type="chain" id="PRO_1000084645" description="tRNA pseudouridine synthase B">
    <location>
        <begin position="1"/>
        <end position="304"/>
    </location>
</feature>
<feature type="active site" description="Nucleophile" evidence="1">
    <location>
        <position position="48"/>
    </location>
</feature>
<reference key="1">
    <citation type="journal article" date="2006" name="Genome Biol.">
        <title>Genomic analysis reveals that Pseudomonas aeruginosa virulence is combinatorial.</title>
        <authorList>
            <person name="Lee D.G."/>
            <person name="Urbach J.M."/>
            <person name="Wu G."/>
            <person name="Liberati N.T."/>
            <person name="Feinbaum R.L."/>
            <person name="Miyata S."/>
            <person name="Diggins L.T."/>
            <person name="He J."/>
            <person name="Saucier M."/>
            <person name="Deziel E."/>
            <person name="Friedman L."/>
            <person name="Li L."/>
            <person name="Grills G."/>
            <person name="Montgomery K."/>
            <person name="Kucherlapati R."/>
            <person name="Rahme L.G."/>
            <person name="Ausubel F.M."/>
        </authorList>
    </citation>
    <scope>NUCLEOTIDE SEQUENCE [LARGE SCALE GENOMIC DNA]</scope>
    <source>
        <strain>UCBPP-PA14</strain>
    </source>
</reference>
<dbReference type="EC" id="5.4.99.25" evidence="1"/>
<dbReference type="EMBL" id="CP000438">
    <property type="protein sequence ID" value="ABJ14125.1"/>
    <property type="molecule type" value="Genomic_DNA"/>
</dbReference>
<dbReference type="RefSeq" id="WP_003135237.1">
    <property type="nucleotide sequence ID" value="NZ_CP034244.1"/>
</dbReference>
<dbReference type="SMR" id="Q02FT0"/>
<dbReference type="KEGG" id="pau:PA14_62730"/>
<dbReference type="PseudoCAP" id="PA14_62730"/>
<dbReference type="HOGENOM" id="CLU_032087_0_3_6"/>
<dbReference type="BioCyc" id="PAER208963:G1G74-5305-MONOMER"/>
<dbReference type="Proteomes" id="UP000000653">
    <property type="component" value="Chromosome"/>
</dbReference>
<dbReference type="GO" id="GO:0003723">
    <property type="term" value="F:RNA binding"/>
    <property type="evidence" value="ECO:0007669"/>
    <property type="project" value="InterPro"/>
</dbReference>
<dbReference type="GO" id="GO:0160148">
    <property type="term" value="F:tRNA pseudouridine(55) synthase activity"/>
    <property type="evidence" value="ECO:0007669"/>
    <property type="project" value="UniProtKB-EC"/>
</dbReference>
<dbReference type="GO" id="GO:1990481">
    <property type="term" value="P:mRNA pseudouridine synthesis"/>
    <property type="evidence" value="ECO:0007669"/>
    <property type="project" value="TreeGrafter"/>
</dbReference>
<dbReference type="GO" id="GO:0031119">
    <property type="term" value="P:tRNA pseudouridine synthesis"/>
    <property type="evidence" value="ECO:0007669"/>
    <property type="project" value="UniProtKB-UniRule"/>
</dbReference>
<dbReference type="CDD" id="cd02573">
    <property type="entry name" value="PseudoU_synth_EcTruB"/>
    <property type="match status" value="1"/>
</dbReference>
<dbReference type="CDD" id="cd21152">
    <property type="entry name" value="PUA_TruB_bacterial"/>
    <property type="match status" value="1"/>
</dbReference>
<dbReference type="FunFam" id="2.30.130.10:FF:000012">
    <property type="entry name" value="tRNA pseudouridine synthase B"/>
    <property type="match status" value="1"/>
</dbReference>
<dbReference type="FunFam" id="3.30.2350.10:FF:000003">
    <property type="entry name" value="tRNA pseudouridine synthase B"/>
    <property type="match status" value="1"/>
</dbReference>
<dbReference type="Gene3D" id="3.30.2350.10">
    <property type="entry name" value="Pseudouridine synthase"/>
    <property type="match status" value="1"/>
</dbReference>
<dbReference type="Gene3D" id="2.30.130.10">
    <property type="entry name" value="PUA domain"/>
    <property type="match status" value="1"/>
</dbReference>
<dbReference type="HAMAP" id="MF_01080">
    <property type="entry name" value="TruB_bact"/>
    <property type="match status" value="1"/>
</dbReference>
<dbReference type="InterPro" id="IPR020103">
    <property type="entry name" value="PsdUridine_synth_cat_dom_sf"/>
</dbReference>
<dbReference type="InterPro" id="IPR002501">
    <property type="entry name" value="PsdUridine_synth_N"/>
</dbReference>
<dbReference type="InterPro" id="IPR015947">
    <property type="entry name" value="PUA-like_sf"/>
</dbReference>
<dbReference type="InterPro" id="IPR036974">
    <property type="entry name" value="PUA_sf"/>
</dbReference>
<dbReference type="InterPro" id="IPR014780">
    <property type="entry name" value="tRNA_psdUridine_synth_TruB"/>
</dbReference>
<dbReference type="InterPro" id="IPR015240">
    <property type="entry name" value="tRNA_sdUridine_synth_fam1_C"/>
</dbReference>
<dbReference type="InterPro" id="IPR032819">
    <property type="entry name" value="TruB_C"/>
</dbReference>
<dbReference type="NCBIfam" id="TIGR00431">
    <property type="entry name" value="TruB"/>
    <property type="match status" value="1"/>
</dbReference>
<dbReference type="PANTHER" id="PTHR13767:SF2">
    <property type="entry name" value="PSEUDOURIDYLATE SYNTHASE TRUB1"/>
    <property type="match status" value="1"/>
</dbReference>
<dbReference type="PANTHER" id="PTHR13767">
    <property type="entry name" value="TRNA-PSEUDOURIDINE SYNTHASE"/>
    <property type="match status" value="1"/>
</dbReference>
<dbReference type="Pfam" id="PF09157">
    <property type="entry name" value="TruB-C_2"/>
    <property type="match status" value="1"/>
</dbReference>
<dbReference type="Pfam" id="PF16198">
    <property type="entry name" value="TruB_C_2"/>
    <property type="match status" value="1"/>
</dbReference>
<dbReference type="Pfam" id="PF01509">
    <property type="entry name" value="TruB_N"/>
    <property type="match status" value="1"/>
</dbReference>
<dbReference type="SUPFAM" id="SSF55120">
    <property type="entry name" value="Pseudouridine synthase"/>
    <property type="match status" value="1"/>
</dbReference>
<dbReference type="SUPFAM" id="SSF88697">
    <property type="entry name" value="PUA domain-like"/>
    <property type="match status" value="1"/>
</dbReference>
<proteinExistence type="inferred from homology"/>
<name>TRUB_PSEAB</name>